<evidence type="ECO:0000256" key="1">
    <source>
        <dbReference type="SAM" id="MobiDB-lite"/>
    </source>
</evidence>
<evidence type="ECO:0000269" key="2">
    <source>
    </source>
</evidence>
<evidence type="ECO:0000305" key="3"/>
<name>MED17_ARATH</name>
<feature type="chain" id="PRO_0000418141" description="Mediator of RNA polymerase II transcription subunit 17">
    <location>
        <begin position="1"/>
        <end position="653"/>
    </location>
</feature>
<feature type="region of interest" description="Disordered" evidence="1">
    <location>
        <begin position="246"/>
        <end position="271"/>
    </location>
</feature>
<proteinExistence type="evidence at protein level"/>
<accession>F4K460</accession>
<keyword id="KW-0539">Nucleus</keyword>
<keyword id="KW-1185">Reference proteome</keyword>
<keyword id="KW-0804">Transcription</keyword>
<keyword id="KW-0805">Transcription regulation</keyword>
<gene>
    <name type="primary">MED17</name>
    <name type="synonym">MED17_1</name>
    <name type="ordered locus">At5g20170</name>
    <name type="ORF">F5O24.60</name>
</gene>
<reference key="1">
    <citation type="journal article" date="2000" name="Nature">
        <title>Sequence and analysis of chromosome 5 of the plant Arabidopsis thaliana.</title>
        <authorList>
            <person name="Tabata S."/>
            <person name="Kaneko T."/>
            <person name="Nakamura Y."/>
            <person name="Kotani H."/>
            <person name="Kato T."/>
            <person name="Asamizu E."/>
            <person name="Miyajima N."/>
            <person name="Sasamoto S."/>
            <person name="Kimura T."/>
            <person name="Hosouchi T."/>
            <person name="Kawashima K."/>
            <person name="Kohara M."/>
            <person name="Matsumoto M."/>
            <person name="Matsuno A."/>
            <person name="Muraki A."/>
            <person name="Nakayama S."/>
            <person name="Nakazaki N."/>
            <person name="Naruo K."/>
            <person name="Okumura S."/>
            <person name="Shinpo S."/>
            <person name="Takeuchi C."/>
            <person name="Wada T."/>
            <person name="Watanabe A."/>
            <person name="Yamada M."/>
            <person name="Yasuda M."/>
            <person name="Sato S."/>
            <person name="de la Bastide M."/>
            <person name="Huang E."/>
            <person name="Spiegel L."/>
            <person name="Gnoj L."/>
            <person name="O'Shaughnessy A."/>
            <person name="Preston R."/>
            <person name="Habermann K."/>
            <person name="Murray J."/>
            <person name="Johnson D."/>
            <person name="Rohlfing T."/>
            <person name="Nelson J."/>
            <person name="Stoneking T."/>
            <person name="Pepin K."/>
            <person name="Spieth J."/>
            <person name="Sekhon M."/>
            <person name="Armstrong J."/>
            <person name="Becker M."/>
            <person name="Belter E."/>
            <person name="Cordum H."/>
            <person name="Cordes M."/>
            <person name="Courtney L."/>
            <person name="Courtney W."/>
            <person name="Dante M."/>
            <person name="Du H."/>
            <person name="Edwards J."/>
            <person name="Fryman J."/>
            <person name="Haakensen B."/>
            <person name="Lamar E."/>
            <person name="Latreille P."/>
            <person name="Leonard S."/>
            <person name="Meyer R."/>
            <person name="Mulvaney E."/>
            <person name="Ozersky P."/>
            <person name="Riley A."/>
            <person name="Strowmatt C."/>
            <person name="Wagner-McPherson C."/>
            <person name="Wollam A."/>
            <person name="Yoakum M."/>
            <person name="Bell M."/>
            <person name="Dedhia N."/>
            <person name="Parnell L."/>
            <person name="Shah R."/>
            <person name="Rodriguez M."/>
            <person name="Hoon See L."/>
            <person name="Vil D."/>
            <person name="Baker J."/>
            <person name="Kirchoff K."/>
            <person name="Toth K."/>
            <person name="King L."/>
            <person name="Bahret A."/>
            <person name="Miller B."/>
            <person name="Marra M.A."/>
            <person name="Martienssen R."/>
            <person name="McCombie W.R."/>
            <person name="Wilson R.K."/>
            <person name="Murphy G."/>
            <person name="Bancroft I."/>
            <person name="Volckaert G."/>
            <person name="Wambutt R."/>
            <person name="Duesterhoeft A."/>
            <person name="Stiekema W."/>
            <person name="Pohl T."/>
            <person name="Entian K.-D."/>
            <person name="Terryn N."/>
            <person name="Hartley N."/>
            <person name="Bent E."/>
            <person name="Johnson S."/>
            <person name="Langham S.-A."/>
            <person name="McCullagh B."/>
            <person name="Robben J."/>
            <person name="Grymonprez B."/>
            <person name="Zimmermann W."/>
            <person name="Ramsperger U."/>
            <person name="Wedler H."/>
            <person name="Balke K."/>
            <person name="Wedler E."/>
            <person name="Peters S."/>
            <person name="van Staveren M."/>
            <person name="Dirkse W."/>
            <person name="Mooijman P."/>
            <person name="Klein Lankhorst R."/>
            <person name="Weitzenegger T."/>
            <person name="Bothe G."/>
            <person name="Rose M."/>
            <person name="Hauf J."/>
            <person name="Berneiser S."/>
            <person name="Hempel S."/>
            <person name="Feldpausch M."/>
            <person name="Lamberth S."/>
            <person name="Villarroel R."/>
            <person name="Gielen J."/>
            <person name="Ardiles W."/>
            <person name="Bents O."/>
            <person name="Lemcke K."/>
            <person name="Kolesov G."/>
            <person name="Mayer K.F.X."/>
            <person name="Rudd S."/>
            <person name="Schoof H."/>
            <person name="Schueller C."/>
            <person name="Zaccaria P."/>
            <person name="Mewes H.-W."/>
            <person name="Bevan M."/>
            <person name="Fransz P.F."/>
        </authorList>
    </citation>
    <scope>NUCLEOTIDE SEQUENCE [LARGE SCALE GENOMIC DNA]</scope>
    <source>
        <strain>cv. Columbia</strain>
    </source>
</reference>
<reference key="2">
    <citation type="journal article" date="2017" name="Plant J.">
        <title>Araport11: a complete reannotation of the Arabidopsis thaliana reference genome.</title>
        <authorList>
            <person name="Cheng C.Y."/>
            <person name="Krishnakumar V."/>
            <person name="Chan A.P."/>
            <person name="Thibaud-Nissen F."/>
            <person name="Schobel S."/>
            <person name="Town C.D."/>
        </authorList>
    </citation>
    <scope>GENOME REANNOTATION</scope>
    <source>
        <strain>cv. Columbia</strain>
    </source>
</reference>
<reference key="3">
    <citation type="journal article" date="2007" name="Mol. Cell">
        <title>Purification of a plant mediator from Arabidopsis thaliana identifies PFT1 as the Med25 subunit.</title>
        <authorList>
            <person name="Baeckstroem S."/>
            <person name="Elfving N."/>
            <person name="Nilsson R."/>
            <person name="Wingsle G."/>
            <person name="Bjoerklund S."/>
        </authorList>
    </citation>
    <scope>IDENTIFICATION BY MASS SPECTROMETRY</scope>
    <scope>SUBUNIT</scope>
    <scope>NOMENCLATURE</scope>
</reference>
<reference key="4">
    <citation type="journal article" date="2011" name="Plant Physiol.">
        <title>The Mediator complex in plants: structure, phylogeny, and expression profiling of representative genes in a dicot (Arabidopsis) and a monocot (rice) during reproduction and abiotic stress.</title>
        <authorList>
            <person name="Mathur S."/>
            <person name="Vyas S."/>
            <person name="Kapoor S."/>
            <person name="Tyagi A.K."/>
        </authorList>
    </citation>
    <scope>IDENTIFICATION</scope>
    <scope>NOMENCLATURE</scope>
</reference>
<comment type="function">
    <text>Component of the Mediator complex, a coactivator involved in the regulated transcription of nearly all RNA polymerase II-dependent genes. Mediator functions as a bridge to convey information from gene-specific regulatory proteins to the basal RNA polymerase II transcription machinery. The Mediator complex, having a compact conformation in its free form, is recruited to promoters by direct interactions with regulatory proteins and serves for the assembly of a functional preinitiation complex with RNA polymerase II and the general transcription factors.</text>
</comment>
<comment type="subunit">
    <text evidence="2">Component of the Mediator complex.</text>
</comment>
<comment type="subcellular location">
    <subcellularLocation>
        <location evidence="3">Nucleus</location>
    </subcellularLocation>
</comment>
<comment type="similarity">
    <text evidence="3">Belongs to the Mediator complex subunit 17 family.</text>
</comment>
<organism>
    <name type="scientific">Arabidopsis thaliana</name>
    <name type="common">Mouse-ear cress</name>
    <dbReference type="NCBI Taxonomy" id="3702"/>
    <lineage>
        <taxon>Eukaryota</taxon>
        <taxon>Viridiplantae</taxon>
        <taxon>Streptophyta</taxon>
        <taxon>Embryophyta</taxon>
        <taxon>Tracheophyta</taxon>
        <taxon>Spermatophyta</taxon>
        <taxon>Magnoliopsida</taxon>
        <taxon>eudicotyledons</taxon>
        <taxon>Gunneridae</taxon>
        <taxon>Pentapetalae</taxon>
        <taxon>rosids</taxon>
        <taxon>malvids</taxon>
        <taxon>Brassicales</taxon>
        <taxon>Brassicaceae</taxon>
        <taxon>Camelineae</taxon>
        <taxon>Arabidopsis</taxon>
    </lineage>
</organism>
<dbReference type="EMBL" id="AF296825">
    <property type="status" value="NOT_ANNOTATED_CDS"/>
    <property type="molecule type" value="Genomic_DNA"/>
</dbReference>
<dbReference type="EMBL" id="CP002688">
    <property type="protein sequence ID" value="AED92808.1"/>
    <property type="molecule type" value="Genomic_DNA"/>
</dbReference>
<dbReference type="RefSeq" id="NP_197517.3">
    <property type="nucleotide sequence ID" value="NM_122024.4"/>
</dbReference>
<dbReference type="FunCoup" id="F4K460">
    <property type="interactions" value="1965"/>
</dbReference>
<dbReference type="IntAct" id="F4K460">
    <property type="interactions" value="7"/>
</dbReference>
<dbReference type="STRING" id="3702.F4K460"/>
<dbReference type="iPTMnet" id="F4K460"/>
<dbReference type="PaxDb" id="3702-AT5G20170.1"/>
<dbReference type="ProteomicsDB" id="238288"/>
<dbReference type="EnsemblPlants" id="AT5G20170.1">
    <property type="protein sequence ID" value="AT5G20170.1"/>
    <property type="gene ID" value="AT5G20170"/>
</dbReference>
<dbReference type="GeneID" id="832140"/>
<dbReference type="Gramene" id="AT5G20170.1">
    <property type="protein sequence ID" value="AT5G20170.1"/>
    <property type="gene ID" value="AT5G20170"/>
</dbReference>
<dbReference type="KEGG" id="ath:AT5G20170"/>
<dbReference type="Araport" id="AT5G20170"/>
<dbReference type="TAIR" id="AT5G20170">
    <property type="gene designation" value="MED17"/>
</dbReference>
<dbReference type="eggNOG" id="ENOG502QT7Z">
    <property type="taxonomic scope" value="Eukaryota"/>
</dbReference>
<dbReference type="HOGENOM" id="CLU_034793_0_0_1"/>
<dbReference type="InParanoid" id="F4K460"/>
<dbReference type="OMA" id="WWLVMDD"/>
<dbReference type="PhylomeDB" id="F4K460"/>
<dbReference type="PRO" id="PR:F4K460"/>
<dbReference type="Proteomes" id="UP000006548">
    <property type="component" value="Chromosome 5"/>
</dbReference>
<dbReference type="ExpressionAtlas" id="F4K460">
    <property type="expression patterns" value="baseline and differential"/>
</dbReference>
<dbReference type="GO" id="GO:0016592">
    <property type="term" value="C:mediator complex"/>
    <property type="evidence" value="ECO:0000314"/>
    <property type="project" value="UniProtKB"/>
</dbReference>
<dbReference type="GO" id="GO:0003712">
    <property type="term" value="F:transcription coregulator activity"/>
    <property type="evidence" value="ECO:0007669"/>
    <property type="project" value="InterPro"/>
</dbReference>
<dbReference type="GO" id="GO:0035196">
    <property type="term" value="P:miRNA processing"/>
    <property type="evidence" value="ECO:0000315"/>
    <property type="project" value="TAIR"/>
</dbReference>
<dbReference type="GO" id="GO:0006357">
    <property type="term" value="P:regulation of transcription by RNA polymerase II"/>
    <property type="evidence" value="ECO:0007669"/>
    <property type="project" value="InterPro"/>
</dbReference>
<dbReference type="InterPro" id="IPR019313">
    <property type="entry name" value="Mediator_Med17"/>
</dbReference>
<dbReference type="PANTHER" id="PTHR13114">
    <property type="entry name" value="MEDIATOR OF RNA POLYMERASE II TRANSCRIPTION SUBUNIT 17"/>
    <property type="match status" value="1"/>
</dbReference>
<dbReference type="PANTHER" id="PTHR13114:SF7">
    <property type="entry name" value="MEDIATOR OF RNA POLYMERASE II TRANSCRIPTION SUBUNIT 17"/>
    <property type="match status" value="1"/>
</dbReference>
<dbReference type="Pfam" id="PF10156">
    <property type="entry name" value="Med17"/>
    <property type="match status" value="1"/>
</dbReference>
<sequence length="653" mass="73404">MDSDMEISLDRLPIKRLESIEENGAERFPSDVDYDDKRVSLIRRIDFAWALEEEDELKKKKQKKSSKDSVEQWKWKGMVENLQLAHQELTVIIDLIDTVQANDAVTVAGMTRPKPMPNEILSDLAVSTATKLQGYRNLGNYFKQSAKALEQKINREARFYGALIRLQRNWKVKRQRMLASNASNEGFTIDLSDSSLYDPTSGFRPSTLSTIRVDHDSAGMLAINVPQDSWYSLRFGYVGLNPIGNSNESDEHIDSTTGHDIPGTSEKLSASDDKYVKETHSLLREVHKSIFAEQLFDMLNREAFNEGVGFNISGLRENFMEMSIGQGASLFVSLHPSGKNPSIKKSESATLLIESSGRVEPAEGGDYRLKKLGFPNRTSYEIYLQQIFHEHAFGKAKDQLKSKSIRASNQTEKDSNSGLLDHFCLSLTHRIFSNRVLVHLESVVCKVPYLHLISHPTWNSRTSSWTVFMTVPPSIIPQGRSETQSPDGKRNLKTQFRTKVVVKDDCISVEAECTPNVVGLLKSSSCNLFSINKYECDVADLPVMILQQVASQIVCWLLEEARTVGTKASREFLSLSLEIVEGERVSLVAHVNPEDAKGCISWWLVMENGCTEEREGVSESRKLLGHLSLDVLYSVLMDLINLCGTGRNALERL</sequence>
<protein>
    <recommendedName>
        <fullName>Mediator of RNA polymerase II transcription subunit 17</fullName>
    </recommendedName>
</protein>